<keyword id="KW-0007">Acetylation</keyword>
<keyword id="KW-1003">Cell membrane</keyword>
<keyword id="KW-0966">Cell projection</keyword>
<keyword id="KW-0449">Lipoprotein</keyword>
<keyword id="KW-0472">Membrane</keyword>
<keyword id="KW-0564">Palmitate</keyword>
<keyword id="KW-0597">Phosphoprotein</keyword>
<keyword id="KW-1185">Reference proteome</keyword>
<keyword id="KW-0728">SH3 domain</keyword>
<keyword id="KW-0808">Transferase</keyword>
<dbReference type="EMBL" id="DP000488">
    <property type="protein sequence ID" value="ABX11001.1"/>
    <property type="molecule type" value="Genomic_DNA"/>
</dbReference>
<dbReference type="RefSeq" id="NP_001162281.1">
    <property type="nucleotide sequence ID" value="NM_001168810.1"/>
</dbReference>
<dbReference type="SMR" id="A9CB74"/>
<dbReference type="STRING" id="9555.ENSPANP00000008237"/>
<dbReference type="Ensembl" id="ENSPANT00000017362.3">
    <property type="protein sequence ID" value="ENSPANP00000008237.3"/>
    <property type="gene ID" value="ENSPANG00000013144.4"/>
</dbReference>
<dbReference type="GeneID" id="100137272"/>
<dbReference type="KEGG" id="panu:100137272"/>
<dbReference type="CTD" id="4354"/>
<dbReference type="eggNOG" id="KOG0609">
    <property type="taxonomic scope" value="Eukaryota"/>
</dbReference>
<dbReference type="GeneTree" id="ENSGT00940000158744"/>
<dbReference type="OMA" id="FERACNS"/>
<dbReference type="OrthoDB" id="5971at314294"/>
<dbReference type="Proteomes" id="UP000028761">
    <property type="component" value="Chromosome X"/>
</dbReference>
<dbReference type="GO" id="GO:0034451">
    <property type="term" value="C:centriolar satellite"/>
    <property type="evidence" value="ECO:0007669"/>
    <property type="project" value="Ensembl"/>
</dbReference>
<dbReference type="GO" id="GO:0030863">
    <property type="term" value="C:cortical cytoskeleton"/>
    <property type="evidence" value="ECO:0007669"/>
    <property type="project" value="Ensembl"/>
</dbReference>
<dbReference type="GO" id="GO:0005886">
    <property type="term" value="C:plasma membrane"/>
    <property type="evidence" value="ECO:0007669"/>
    <property type="project" value="UniProtKB-SubCell"/>
</dbReference>
<dbReference type="GO" id="GO:0032420">
    <property type="term" value="C:stereocilium"/>
    <property type="evidence" value="ECO:0007669"/>
    <property type="project" value="UniProtKB-SubCell"/>
</dbReference>
<dbReference type="GO" id="GO:0016740">
    <property type="term" value="F:transferase activity"/>
    <property type="evidence" value="ECO:0007669"/>
    <property type="project" value="UniProtKB-KW"/>
</dbReference>
<dbReference type="GO" id="GO:0090022">
    <property type="term" value="P:regulation of neutrophil chemotaxis"/>
    <property type="evidence" value="ECO:0000250"/>
    <property type="project" value="UniProtKB"/>
</dbReference>
<dbReference type="CDD" id="cd00071">
    <property type="entry name" value="GMPK"/>
    <property type="match status" value="1"/>
</dbReference>
<dbReference type="CDD" id="cd10830">
    <property type="entry name" value="PDZ_MPP1-like"/>
    <property type="match status" value="1"/>
</dbReference>
<dbReference type="CDD" id="cd12080">
    <property type="entry name" value="SH3_MPP1"/>
    <property type="match status" value="1"/>
</dbReference>
<dbReference type="FunFam" id="2.30.30.40:FF:000135">
    <property type="entry name" value="55 kDa erythrocyte membrane protein"/>
    <property type="match status" value="1"/>
</dbReference>
<dbReference type="FunFam" id="3.30.63.10:FF:000002">
    <property type="entry name" value="Guanylate kinase 1"/>
    <property type="match status" value="1"/>
</dbReference>
<dbReference type="FunFam" id="3.40.50.300:FF:000146">
    <property type="entry name" value="MAGUK p55 subfamily member 6 isoform X1"/>
    <property type="match status" value="1"/>
</dbReference>
<dbReference type="FunFam" id="2.30.42.10:FF:000016">
    <property type="entry name" value="peripheral plasma membrane protein CASK isoform X2"/>
    <property type="match status" value="1"/>
</dbReference>
<dbReference type="Gene3D" id="2.30.42.10">
    <property type="match status" value="1"/>
</dbReference>
<dbReference type="Gene3D" id="3.40.50.300">
    <property type="entry name" value="P-loop containing nucleotide triphosphate hydrolases"/>
    <property type="match status" value="1"/>
</dbReference>
<dbReference type="Gene3D" id="2.30.30.40">
    <property type="entry name" value="SH3 Domains"/>
    <property type="match status" value="1"/>
</dbReference>
<dbReference type="InterPro" id="IPR008145">
    <property type="entry name" value="GK/Ca_channel_bsu"/>
</dbReference>
<dbReference type="InterPro" id="IPR008144">
    <property type="entry name" value="Guanylate_kin-like_dom"/>
</dbReference>
<dbReference type="InterPro" id="IPR020590">
    <property type="entry name" value="Guanylate_kinase_CS"/>
</dbReference>
<dbReference type="InterPro" id="IPR050716">
    <property type="entry name" value="MAGUK"/>
</dbReference>
<dbReference type="InterPro" id="IPR035475">
    <property type="entry name" value="MPP1_SH3"/>
</dbReference>
<dbReference type="InterPro" id="IPR027417">
    <property type="entry name" value="P-loop_NTPase"/>
</dbReference>
<dbReference type="InterPro" id="IPR001478">
    <property type="entry name" value="PDZ"/>
</dbReference>
<dbReference type="InterPro" id="IPR036034">
    <property type="entry name" value="PDZ_sf"/>
</dbReference>
<dbReference type="InterPro" id="IPR036028">
    <property type="entry name" value="SH3-like_dom_sf"/>
</dbReference>
<dbReference type="InterPro" id="IPR001452">
    <property type="entry name" value="SH3_domain"/>
</dbReference>
<dbReference type="PANTHER" id="PTHR23122">
    <property type="entry name" value="MEMBRANE-ASSOCIATED GUANYLATE KINASE MAGUK"/>
    <property type="match status" value="1"/>
</dbReference>
<dbReference type="Pfam" id="PF00625">
    <property type="entry name" value="Guanylate_kin"/>
    <property type="match status" value="1"/>
</dbReference>
<dbReference type="Pfam" id="PF00595">
    <property type="entry name" value="PDZ"/>
    <property type="match status" value="1"/>
</dbReference>
<dbReference type="Pfam" id="PF00018">
    <property type="entry name" value="SH3_1"/>
    <property type="match status" value="1"/>
</dbReference>
<dbReference type="SMART" id="SM00072">
    <property type="entry name" value="GuKc"/>
    <property type="match status" value="1"/>
</dbReference>
<dbReference type="SMART" id="SM00228">
    <property type="entry name" value="PDZ"/>
    <property type="match status" value="1"/>
</dbReference>
<dbReference type="SMART" id="SM00326">
    <property type="entry name" value="SH3"/>
    <property type="match status" value="1"/>
</dbReference>
<dbReference type="SUPFAM" id="SSF52540">
    <property type="entry name" value="P-loop containing nucleoside triphosphate hydrolases"/>
    <property type="match status" value="1"/>
</dbReference>
<dbReference type="SUPFAM" id="SSF50156">
    <property type="entry name" value="PDZ domain-like"/>
    <property type="match status" value="1"/>
</dbReference>
<dbReference type="SUPFAM" id="SSF50044">
    <property type="entry name" value="SH3-domain"/>
    <property type="match status" value="1"/>
</dbReference>
<dbReference type="PROSITE" id="PS00856">
    <property type="entry name" value="GUANYLATE_KINASE_1"/>
    <property type="match status" value="1"/>
</dbReference>
<dbReference type="PROSITE" id="PS50052">
    <property type="entry name" value="GUANYLATE_KINASE_2"/>
    <property type="match status" value="1"/>
</dbReference>
<dbReference type="PROSITE" id="PS50106">
    <property type="entry name" value="PDZ"/>
    <property type="match status" value="1"/>
</dbReference>
<dbReference type="PROSITE" id="PS50002">
    <property type="entry name" value="SH3"/>
    <property type="match status" value="1"/>
</dbReference>
<evidence type="ECO:0000250" key="1"/>
<evidence type="ECO:0000250" key="2">
    <source>
        <dbReference type="UniProtKB" id="P70290"/>
    </source>
</evidence>
<evidence type="ECO:0000250" key="3">
    <source>
        <dbReference type="UniProtKB" id="Q00013"/>
    </source>
</evidence>
<evidence type="ECO:0000255" key="4">
    <source>
        <dbReference type="PROSITE-ProRule" id="PRU00100"/>
    </source>
</evidence>
<evidence type="ECO:0000255" key="5">
    <source>
        <dbReference type="PROSITE-ProRule" id="PRU00143"/>
    </source>
</evidence>
<evidence type="ECO:0000255" key="6">
    <source>
        <dbReference type="PROSITE-ProRule" id="PRU00192"/>
    </source>
</evidence>
<evidence type="ECO:0000305" key="7"/>
<organism>
    <name type="scientific">Papio anubis</name>
    <name type="common">Olive baboon</name>
    <dbReference type="NCBI Taxonomy" id="9555"/>
    <lineage>
        <taxon>Eukaryota</taxon>
        <taxon>Metazoa</taxon>
        <taxon>Chordata</taxon>
        <taxon>Craniata</taxon>
        <taxon>Vertebrata</taxon>
        <taxon>Euteleostomi</taxon>
        <taxon>Mammalia</taxon>
        <taxon>Eutheria</taxon>
        <taxon>Euarchontoglires</taxon>
        <taxon>Primates</taxon>
        <taxon>Haplorrhini</taxon>
        <taxon>Catarrhini</taxon>
        <taxon>Cercopithecidae</taxon>
        <taxon>Cercopithecinae</taxon>
        <taxon>Papio</taxon>
    </lineage>
</organism>
<feature type="initiator methionine" description="Removed" evidence="3">
    <location>
        <position position="1"/>
    </location>
</feature>
<feature type="chain" id="PRO_0000347218" description="55 kDa erythrocyte membrane protein">
    <location>
        <begin position="2"/>
        <end position="466"/>
    </location>
</feature>
<feature type="domain" description="PDZ" evidence="5">
    <location>
        <begin position="71"/>
        <end position="152"/>
    </location>
</feature>
<feature type="domain" description="SH3" evidence="6">
    <location>
        <begin position="158"/>
        <end position="228"/>
    </location>
</feature>
<feature type="domain" description="Guanylate kinase-like" evidence="4">
    <location>
        <begin position="282"/>
        <end position="451"/>
    </location>
</feature>
<feature type="region of interest" description="Interaction with PALS1" evidence="1">
    <location>
        <begin position="268"/>
        <end position="466"/>
    </location>
</feature>
<feature type="modified residue" description="N-acetylthreonine" evidence="3">
    <location>
        <position position="2"/>
    </location>
</feature>
<feature type="modified residue" description="Phosphoserine" evidence="3">
    <location>
        <position position="13"/>
    </location>
</feature>
<feature type="modified residue" description="Phosphoserine" evidence="3">
    <location>
        <position position="19"/>
    </location>
</feature>
<feature type="modified residue" description="Phosphothreonine" evidence="3">
    <location>
        <position position="49"/>
    </location>
</feature>
<feature type="modified residue" description="Phosphoserine" evidence="2">
    <location>
        <position position="52"/>
    </location>
</feature>
<feature type="modified residue" description="Phosphoserine" evidence="3">
    <location>
        <position position="57"/>
    </location>
</feature>
<feature type="modified residue" description="Phosphoserine" evidence="3">
    <location>
        <position position="110"/>
    </location>
</feature>
<feature type="modified residue" description="Phosphoserine" evidence="3">
    <location>
        <position position="243"/>
    </location>
</feature>
<gene>
    <name type="primary">MPP1</name>
    <name type="synonym">EMP55</name>
</gene>
<protein>
    <recommendedName>
        <fullName>55 kDa erythrocyte membrane protein</fullName>
        <shortName>p55</shortName>
    </recommendedName>
    <alternativeName>
        <fullName>Membrane protein, palmitoylated 1</fullName>
    </alternativeName>
</protein>
<comment type="function">
    <text evidence="1">Essential regulator of neutrophil polarity. Regulates neutrophil polarization by regulating AKT1 phosphorylation through a mechanism that is independent of PIK3CG activity (By similarity).</text>
</comment>
<comment type="subunit">
    <text evidence="1">Heterodimer with PALS1. Interacts with DLG5 and NF2. Interacts (via guanylate kinase-like domain) with WHRN (via third PDZ domain) (By similarity).</text>
</comment>
<comment type="subcellular location">
    <subcellularLocation>
        <location evidence="3">Cell membrane</location>
        <topology evidence="3">Lipid-anchor</topology>
    </subcellularLocation>
    <subcellularLocation>
        <location evidence="2">Cell projection</location>
        <location evidence="2">Stereocilium</location>
    </subcellularLocation>
    <text evidence="2 3">Colocalizes with WHRN at stereocilium tip during hair cell development. Colocalizes with PALS1 in the retina, at the outer limiting membrane (OLM). Colocalizes with WHRN in the retina, at the outer limiting membrane (OLM), outer plexifirm layer (OPL), basal bodies, and at connecting cilium (CC) (By similarity). Colocalizes with NF2 in non-myelin-forming Schwann cells (By similarity).</text>
</comment>
<comment type="PTM">
    <text evidence="3">Palmitoylated.</text>
</comment>
<comment type="similarity">
    <text evidence="7">Belongs to the MAGUK family.</text>
</comment>
<proteinExistence type="inferred from homology"/>
<name>EM55_PAPAN</name>
<reference key="1">
    <citation type="submission" date="2007-11" db="EMBL/GenBank/DDBJ databases">
        <title>NISC comparative sequencing initiative.</title>
        <authorList>
            <person name="Antonellis A."/>
            <person name="Benjamin B."/>
            <person name="Blakesley R.W."/>
            <person name="Bouffard G.G."/>
            <person name="Brinkley C."/>
            <person name="Brooks S."/>
            <person name="Chu G."/>
            <person name="Chub I."/>
            <person name="Coleman H."/>
            <person name="Fuksenko T."/>
            <person name="Gestole M."/>
            <person name="Gregory M."/>
            <person name="Guan X."/>
            <person name="Gupta J."/>
            <person name="Gurson N."/>
            <person name="Han E."/>
            <person name="Han J."/>
            <person name="Hansen N."/>
            <person name="Hargrove A."/>
            <person name="Hines-Harris K."/>
            <person name="Ho S.-L."/>
            <person name="Hu P."/>
            <person name="Hunter G."/>
            <person name="Hurle B."/>
            <person name="Idol J.R."/>
            <person name="Johnson T."/>
            <person name="Knight E."/>
            <person name="Kwong P."/>
            <person name="Lee-Lin S.-Q."/>
            <person name="Legaspi R."/>
            <person name="Madden M."/>
            <person name="Maduro Q.L."/>
            <person name="Maduro V.B."/>
            <person name="Margulies E.H."/>
            <person name="Masiello C."/>
            <person name="Maskeri B."/>
            <person name="McDowell J."/>
            <person name="Merkulov G."/>
            <person name="Montemayor C."/>
            <person name="Mullikin J.C."/>
            <person name="Park M."/>
            <person name="Prasad A."/>
            <person name="Ramsahoye C."/>
            <person name="Reddix-Dugue N."/>
            <person name="Riebow N."/>
            <person name="Schandler K."/>
            <person name="Schueler M.G."/>
            <person name="Sison C."/>
            <person name="Smith L."/>
            <person name="Stantripop S."/>
            <person name="Thomas J.W."/>
            <person name="Thomas P.J."/>
            <person name="Tsipouri V."/>
            <person name="Young A."/>
            <person name="Green E.D."/>
        </authorList>
    </citation>
    <scope>NUCLEOTIDE SEQUENCE [LARGE SCALE GENOMIC DNA]</scope>
</reference>
<accession>A9CB74</accession>
<sequence length="466" mass="52247">MTLKASEGESGGSMHTALSDLYLEHLLQKRSRPEAVSHPLNTVTEDMYTNGSPAPGSPAQVKGQEVRKVRLIQIEKVTEEPMGITLKLNEKQSCTVARILHGGMIHRQGSLHVGDEILEINGTNVTNHSVDQLQKAMKETKGMISLKVIPNQQSRLPALQMFMRAQFDYDPKKDNLIPCKEAGLKFATGDIIQIINKDDSNWWQGRVEGSSKESAGLIPSPELQEWRVASIAQSAPSEAPSCSPFGKKKKYKDKYLAKHSSIFDQLDVVSYEEVVRLPAFKRKTLVLIGASGVGRSHIKNALLSQNPEKFVYPAPYTTRPPRKSEEDGKEYHFISTEEMTRNISANEFLEFGSYQGNMFGTKFETVHQIHKQDKIAILDIEPQTLKIVRTAELSPFIVFIAPTDQGTQTEALQQLQKDSEAIRSQYAHYFDLSLVNNSVDETLKKLQEAFDQACSSPQWVPVSWVY</sequence>